<accession>A1K9J6</accession>
<organism>
    <name type="scientific">Azoarcus sp. (strain BH72)</name>
    <dbReference type="NCBI Taxonomy" id="418699"/>
    <lineage>
        <taxon>Bacteria</taxon>
        <taxon>Pseudomonadati</taxon>
        <taxon>Pseudomonadota</taxon>
        <taxon>Betaproteobacteria</taxon>
        <taxon>Rhodocyclales</taxon>
        <taxon>Zoogloeaceae</taxon>
        <taxon>Azoarcus</taxon>
    </lineage>
</organism>
<gene>
    <name evidence="1" type="primary">pdxA</name>
    <name type="ordered locus">azo2885</name>
</gene>
<evidence type="ECO:0000255" key="1">
    <source>
        <dbReference type="HAMAP-Rule" id="MF_00536"/>
    </source>
</evidence>
<sequence length="330" mass="33928">MAALPVLAVTSGEPAGVGPELCARLLARDWPARLVVLGDADLIAARAAAVGSPIAVRHYSRGQAQAAGVLEVLHIPLAEPSDAGRLAVGNARYVLALLDRALAGCVGGEFAGMVTAPVHKGVICESGIAFSGHTEYLAEHTATPLVVMMLVGGGMRVALATTHLPLAAVSAAITRPVLEQTLRILHADLVQRFGIAAPRILVAGLNPHAGEGGHMGREEIEVITPVLDRLRAEGLQLVGPLPADTLFAPHTLAHGDAVLAMYHDQGLPVLKHASFGGGVNVTLGLPVIRTSVDHGTALDLAGSGRADPGSLYAAVELAVSMAEARARQPR</sequence>
<proteinExistence type="inferred from homology"/>
<comment type="function">
    <text evidence="1">Catalyzes the NAD(P)-dependent oxidation of 4-(phosphooxy)-L-threonine (HTP) into 2-amino-3-oxo-4-(phosphooxy)butyric acid which spontaneously decarboxylates to form 3-amino-2-oxopropyl phosphate (AHAP).</text>
</comment>
<comment type="catalytic activity">
    <reaction evidence="1">
        <text>4-(phosphooxy)-L-threonine + NAD(+) = 3-amino-2-oxopropyl phosphate + CO2 + NADH</text>
        <dbReference type="Rhea" id="RHEA:32275"/>
        <dbReference type="ChEBI" id="CHEBI:16526"/>
        <dbReference type="ChEBI" id="CHEBI:57279"/>
        <dbReference type="ChEBI" id="CHEBI:57540"/>
        <dbReference type="ChEBI" id="CHEBI:57945"/>
        <dbReference type="ChEBI" id="CHEBI:58452"/>
        <dbReference type="EC" id="1.1.1.262"/>
    </reaction>
</comment>
<comment type="cofactor">
    <cofactor evidence="1">
        <name>Zn(2+)</name>
        <dbReference type="ChEBI" id="CHEBI:29105"/>
    </cofactor>
    <cofactor evidence="1">
        <name>Mg(2+)</name>
        <dbReference type="ChEBI" id="CHEBI:18420"/>
    </cofactor>
    <cofactor evidence="1">
        <name>Co(2+)</name>
        <dbReference type="ChEBI" id="CHEBI:48828"/>
    </cofactor>
    <text evidence="1">Binds 1 divalent metal cation per subunit. Can use ions such as Zn(2+), Mg(2+) or Co(2+).</text>
</comment>
<comment type="pathway">
    <text evidence="1">Cofactor biosynthesis; pyridoxine 5'-phosphate biosynthesis; pyridoxine 5'-phosphate from D-erythrose 4-phosphate: step 4/5.</text>
</comment>
<comment type="subunit">
    <text evidence="1">Homodimer.</text>
</comment>
<comment type="subcellular location">
    <subcellularLocation>
        <location evidence="1">Cytoplasm</location>
    </subcellularLocation>
</comment>
<comment type="miscellaneous">
    <text evidence="1">The active site is located at the dimer interface.</text>
</comment>
<comment type="similarity">
    <text evidence="1">Belongs to the PdxA family.</text>
</comment>
<feature type="chain" id="PRO_1000051489" description="4-hydroxythreonine-4-phosphate dehydrogenase">
    <location>
        <begin position="1"/>
        <end position="330"/>
    </location>
</feature>
<feature type="binding site" evidence="1">
    <location>
        <position position="133"/>
    </location>
    <ligand>
        <name>substrate</name>
    </ligand>
</feature>
<feature type="binding site" evidence="1">
    <location>
        <position position="134"/>
    </location>
    <ligand>
        <name>substrate</name>
    </ligand>
</feature>
<feature type="binding site" evidence="1">
    <location>
        <position position="163"/>
    </location>
    <ligand>
        <name>a divalent metal cation</name>
        <dbReference type="ChEBI" id="CHEBI:60240"/>
        <note>ligand shared between dimeric partners</note>
    </ligand>
</feature>
<feature type="binding site" evidence="1">
    <location>
        <position position="208"/>
    </location>
    <ligand>
        <name>a divalent metal cation</name>
        <dbReference type="ChEBI" id="CHEBI:60240"/>
        <note>ligand shared between dimeric partners</note>
    </ligand>
</feature>
<feature type="binding site" evidence="1">
    <location>
        <position position="263"/>
    </location>
    <ligand>
        <name>a divalent metal cation</name>
        <dbReference type="ChEBI" id="CHEBI:60240"/>
        <note>ligand shared between dimeric partners</note>
    </ligand>
</feature>
<feature type="binding site" evidence="1">
    <location>
        <position position="271"/>
    </location>
    <ligand>
        <name>substrate</name>
    </ligand>
</feature>
<feature type="binding site" evidence="1">
    <location>
        <position position="280"/>
    </location>
    <ligand>
        <name>substrate</name>
    </ligand>
</feature>
<feature type="binding site" evidence="1">
    <location>
        <position position="289"/>
    </location>
    <ligand>
        <name>substrate</name>
    </ligand>
</feature>
<reference key="1">
    <citation type="journal article" date="2006" name="Nat. Biotechnol.">
        <title>Complete genome of the mutualistic, N2-fixing grass endophyte Azoarcus sp. strain BH72.</title>
        <authorList>
            <person name="Krause A."/>
            <person name="Ramakumar A."/>
            <person name="Bartels D."/>
            <person name="Battistoni F."/>
            <person name="Bekel T."/>
            <person name="Boch J."/>
            <person name="Boehm M."/>
            <person name="Friedrich F."/>
            <person name="Hurek T."/>
            <person name="Krause L."/>
            <person name="Linke B."/>
            <person name="McHardy A.C."/>
            <person name="Sarkar A."/>
            <person name="Schneiker S."/>
            <person name="Syed A.A."/>
            <person name="Thauer R."/>
            <person name="Vorhoelter F.-J."/>
            <person name="Weidner S."/>
            <person name="Puehler A."/>
            <person name="Reinhold-Hurek B."/>
            <person name="Kaiser O."/>
            <person name="Goesmann A."/>
        </authorList>
    </citation>
    <scope>NUCLEOTIDE SEQUENCE [LARGE SCALE GENOMIC DNA]</scope>
    <source>
        <strain>BH72</strain>
    </source>
</reference>
<protein>
    <recommendedName>
        <fullName evidence="1">4-hydroxythreonine-4-phosphate dehydrogenase</fullName>
        <ecNumber evidence="1">1.1.1.262</ecNumber>
    </recommendedName>
    <alternativeName>
        <fullName evidence="1">4-(phosphohydroxy)-L-threonine dehydrogenase</fullName>
    </alternativeName>
</protein>
<dbReference type="EC" id="1.1.1.262" evidence="1"/>
<dbReference type="EMBL" id="AM406670">
    <property type="protein sequence ID" value="CAL95501.1"/>
    <property type="molecule type" value="Genomic_DNA"/>
</dbReference>
<dbReference type="RefSeq" id="WP_011766611.1">
    <property type="nucleotide sequence ID" value="NC_008702.1"/>
</dbReference>
<dbReference type="SMR" id="A1K9J6"/>
<dbReference type="STRING" id="62928.azo2885"/>
<dbReference type="KEGG" id="azo:azo2885"/>
<dbReference type="eggNOG" id="COG1995">
    <property type="taxonomic scope" value="Bacteria"/>
</dbReference>
<dbReference type="HOGENOM" id="CLU_040168_2_0_4"/>
<dbReference type="UniPathway" id="UPA00244">
    <property type="reaction ID" value="UER00312"/>
</dbReference>
<dbReference type="Proteomes" id="UP000002588">
    <property type="component" value="Chromosome"/>
</dbReference>
<dbReference type="GO" id="GO:0005737">
    <property type="term" value="C:cytoplasm"/>
    <property type="evidence" value="ECO:0007669"/>
    <property type="project" value="UniProtKB-SubCell"/>
</dbReference>
<dbReference type="GO" id="GO:0050570">
    <property type="term" value="F:4-hydroxythreonine-4-phosphate dehydrogenase activity"/>
    <property type="evidence" value="ECO:0007669"/>
    <property type="project" value="UniProtKB-UniRule"/>
</dbReference>
<dbReference type="GO" id="GO:0050897">
    <property type="term" value="F:cobalt ion binding"/>
    <property type="evidence" value="ECO:0007669"/>
    <property type="project" value="UniProtKB-UniRule"/>
</dbReference>
<dbReference type="GO" id="GO:0000287">
    <property type="term" value="F:magnesium ion binding"/>
    <property type="evidence" value="ECO:0007669"/>
    <property type="project" value="UniProtKB-UniRule"/>
</dbReference>
<dbReference type="GO" id="GO:0051287">
    <property type="term" value="F:NAD binding"/>
    <property type="evidence" value="ECO:0007669"/>
    <property type="project" value="InterPro"/>
</dbReference>
<dbReference type="GO" id="GO:0008270">
    <property type="term" value="F:zinc ion binding"/>
    <property type="evidence" value="ECO:0007669"/>
    <property type="project" value="UniProtKB-UniRule"/>
</dbReference>
<dbReference type="GO" id="GO:0042823">
    <property type="term" value="P:pyridoxal phosphate biosynthetic process"/>
    <property type="evidence" value="ECO:0007669"/>
    <property type="project" value="UniProtKB-UniRule"/>
</dbReference>
<dbReference type="GO" id="GO:0008615">
    <property type="term" value="P:pyridoxine biosynthetic process"/>
    <property type="evidence" value="ECO:0007669"/>
    <property type="project" value="UniProtKB-UniRule"/>
</dbReference>
<dbReference type="Gene3D" id="3.40.718.10">
    <property type="entry name" value="Isopropylmalate Dehydrogenase"/>
    <property type="match status" value="1"/>
</dbReference>
<dbReference type="HAMAP" id="MF_00536">
    <property type="entry name" value="PdxA"/>
    <property type="match status" value="1"/>
</dbReference>
<dbReference type="InterPro" id="IPR037510">
    <property type="entry name" value="PdxA"/>
</dbReference>
<dbReference type="InterPro" id="IPR005255">
    <property type="entry name" value="PdxA_fam"/>
</dbReference>
<dbReference type="NCBIfam" id="TIGR00557">
    <property type="entry name" value="pdxA"/>
    <property type="match status" value="1"/>
</dbReference>
<dbReference type="PANTHER" id="PTHR30004">
    <property type="entry name" value="4-HYDROXYTHREONINE-4-PHOSPHATE DEHYDROGENASE"/>
    <property type="match status" value="1"/>
</dbReference>
<dbReference type="PANTHER" id="PTHR30004:SF5">
    <property type="entry name" value="4-HYDROXYTHREONINE-4-PHOSPHATE DEHYDROGENASE"/>
    <property type="match status" value="1"/>
</dbReference>
<dbReference type="Pfam" id="PF04166">
    <property type="entry name" value="PdxA"/>
    <property type="match status" value="1"/>
</dbReference>
<dbReference type="SUPFAM" id="SSF53659">
    <property type="entry name" value="Isocitrate/Isopropylmalate dehydrogenase-like"/>
    <property type="match status" value="1"/>
</dbReference>
<name>PDXA_AZOSB</name>
<keyword id="KW-0170">Cobalt</keyword>
<keyword id="KW-0963">Cytoplasm</keyword>
<keyword id="KW-0460">Magnesium</keyword>
<keyword id="KW-0479">Metal-binding</keyword>
<keyword id="KW-0520">NAD</keyword>
<keyword id="KW-0521">NADP</keyword>
<keyword id="KW-0560">Oxidoreductase</keyword>
<keyword id="KW-0664">Pyridoxine biosynthesis</keyword>
<keyword id="KW-1185">Reference proteome</keyword>
<keyword id="KW-0862">Zinc</keyword>